<reference key="1">
    <citation type="journal article" date="1997" name="Nature">
        <title>The nucleotide sequence of Saccharomyces cerevisiae chromosome IV.</title>
        <authorList>
            <person name="Jacq C."/>
            <person name="Alt-Moerbe J."/>
            <person name="Andre B."/>
            <person name="Arnold W."/>
            <person name="Bahr A."/>
            <person name="Ballesta J.P.G."/>
            <person name="Bargues M."/>
            <person name="Baron L."/>
            <person name="Becker A."/>
            <person name="Biteau N."/>
            <person name="Bloecker H."/>
            <person name="Blugeon C."/>
            <person name="Boskovic J."/>
            <person name="Brandt P."/>
            <person name="Brueckner M."/>
            <person name="Buitrago M.J."/>
            <person name="Coster F."/>
            <person name="Delaveau T."/>
            <person name="del Rey F."/>
            <person name="Dujon B."/>
            <person name="Eide L.G."/>
            <person name="Garcia-Cantalejo J.M."/>
            <person name="Goffeau A."/>
            <person name="Gomez-Peris A."/>
            <person name="Granotier C."/>
            <person name="Hanemann V."/>
            <person name="Hankeln T."/>
            <person name="Hoheisel J.D."/>
            <person name="Jaeger W."/>
            <person name="Jimenez A."/>
            <person name="Jonniaux J.-L."/>
            <person name="Kraemer C."/>
            <person name="Kuester H."/>
            <person name="Laamanen P."/>
            <person name="Legros Y."/>
            <person name="Louis E.J."/>
            <person name="Moeller-Rieker S."/>
            <person name="Monnet A."/>
            <person name="Moro M."/>
            <person name="Mueller-Auer S."/>
            <person name="Nussbaumer B."/>
            <person name="Paricio N."/>
            <person name="Paulin L."/>
            <person name="Perea J."/>
            <person name="Perez-Alonso M."/>
            <person name="Perez-Ortin J.E."/>
            <person name="Pohl T.M."/>
            <person name="Prydz H."/>
            <person name="Purnelle B."/>
            <person name="Rasmussen S.W."/>
            <person name="Remacha M.A."/>
            <person name="Revuelta J.L."/>
            <person name="Rieger M."/>
            <person name="Salom D."/>
            <person name="Saluz H.P."/>
            <person name="Saiz J.E."/>
            <person name="Saren A.-M."/>
            <person name="Schaefer M."/>
            <person name="Scharfe M."/>
            <person name="Schmidt E.R."/>
            <person name="Schneider C."/>
            <person name="Scholler P."/>
            <person name="Schwarz S."/>
            <person name="Soler-Mira A."/>
            <person name="Urrestarazu L.A."/>
            <person name="Verhasselt P."/>
            <person name="Vissers S."/>
            <person name="Voet M."/>
            <person name="Volckaert G."/>
            <person name="Wagner G."/>
            <person name="Wambutt R."/>
            <person name="Wedler E."/>
            <person name="Wedler H."/>
            <person name="Woelfl S."/>
            <person name="Harris D.E."/>
            <person name="Bowman S."/>
            <person name="Brown D."/>
            <person name="Churcher C.M."/>
            <person name="Connor R."/>
            <person name="Dedman K."/>
            <person name="Gentles S."/>
            <person name="Hamlin N."/>
            <person name="Hunt S."/>
            <person name="Jones L."/>
            <person name="McDonald S."/>
            <person name="Murphy L.D."/>
            <person name="Niblett D."/>
            <person name="Odell C."/>
            <person name="Oliver K."/>
            <person name="Rajandream M.A."/>
            <person name="Richards C."/>
            <person name="Shore L."/>
            <person name="Walsh S.V."/>
            <person name="Barrell B.G."/>
            <person name="Dietrich F.S."/>
            <person name="Mulligan J.T."/>
            <person name="Allen E."/>
            <person name="Araujo R."/>
            <person name="Aviles E."/>
            <person name="Berno A."/>
            <person name="Carpenter J."/>
            <person name="Chen E."/>
            <person name="Cherry J.M."/>
            <person name="Chung E."/>
            <person name="Duncan M."/>
            <person name="Hunicke-Smith S."/>
            <person name="Hyman R.W."/>
            <person name="Komp C."/>
            <person name="Lashkari D."/>
            <person name="Lew H."/>
            <person name="Lin D."/>
            <person name="Mosedale D."/>
            <person name="Nakahara K."/>
            <person name="Namath A."/>
            <person name="Oefner P."/>
            <person name="Oh C."/>
            <person name="Petel F.X."/>
            <person name="Roberts D."/>
            <person name="Schramm S."/>
            <person name="Schroeder M."/>
            <person name="Shogren T."/>
            <person name="Shroff N."/>
            <person name="Winant A."/>
            <person name="Yelton M.A."/>
            <person name="Botstein D."/>
            <person name="Davis R.W."/>
            <person name="Johnston M."/>
            <person name="Andrews S."/>
            <person name="Brinkman R."/>
            <person name="Cooper J."/>
            <person name="Ding H."/>
            <person name="Du Z."/>
            <person name="Favello A."/>
            <person name="Fulton L."/>
            <person name="Gattung S."/>
            <person name="Greco T."/>
            <person name="Hallsworth K."/>
            <person name="Hawkins J."/>
            <person name="Hillier L.W."/>
            <person name="Jier M."/>
            <person name="Johnson D."/>
            <person name="Johnston L."/>
            <person name="Kirsten J."/>
            <person name="Kucaba T."/>
            <person name="Langston Y."/>
            <person name="Latreille P."/>
            <person name="Le T."/>
            <person name="Mardis E."/>
            <person name="Menezes S."/>
            <person name="Miller N."/>
            <person name="Nhan M."/>
            <person name="Pauley A."/>
            <person name="Peluso D."/>
            <person name="Rifkin L."/>
            <person name="Riles L."/>
            <person name="Taich A."/>
            <person name="Trevaskis E."/>
            <person name="Vignati D."/>
            <person name="Wilcox L."/>
            <person name="Wohldman P."/>
            <person name="Vaudin M."/>
            <person name="Wilson R."/>
            <person name="Waterston R."/>
            <person name="Albermann K."/>
            <person name="Hani J."/>
            <person name="Heumann K."/>
            <person name="Kleine K."/>
            <person name="Mewes H.-W."/>
            <person name="Zollner A."/>
            <person name="Zaccaria P."/>
        </authorList>
    </citation>
    <scope>NUCLEOTIDE SEQUENCE [LARGE SCALE GENOMIC DNA]</scope>
    <source>
        <strain>ATCC 204508 / S288c</strain>
    </source>
</reference>
<reference key="2">
    <citation type="journal article" date="2014" name="G3 (Bethesda)">
        <title>The reference genome sequence of Saccharomyces cerevisiae: Then and now.</title>
        <authorList>
            <person name="Engel S.R."/>
            <person name="Dietrich F.S."/>
            <person name="Fisk D.G."/>
            <person name="Binkley G."/>
            <person name="Balakrishnan R."/>
            <person name="Costanzo M.C."/>
            <person name="Dwight S.S."/>
            <person name="Hitz B.C."/>
            <person name="Karra K."/>
            <person name="Nash R.S."/>
            <person name="Weng S."/>
            <person name="Wong E.D."/>
            <person name="Lloyd P."/>
            <person name="Skrzypek M.S."/>
            <person name="Miyasato S.R."/>
            <person name="Simison M."/>
            <person name="Cherry J.M."/>
        </authorList>
    </citation>
    <scope>GENOME REANNOTATION</scope>
    <source>
        <strain>ATCC 204508 / S288c</strain>
    </source>
</reference>
<reference key="3">
    <citation type="journal article" date="1996" name="J. Bacteriol.">
        <title>Molecular cloning and characterization of Saccharomyces cerevisiae RAD28, the yeast homolog of the human Cockayne syndrome A (CSA) gene.</title>
        <authorList>
            <person name="Bhatia P.K."/>
            <person name="Verhage R.A."/>
            <person name="Brouwer J."/>
            <person name="Friedberg E.C."/>
        </authorList>
    </citation>
    <scope>FUNCTION</scope>
</reference>
<reference key="4">
    <citation type="journal article" date="1997" name="Nucleic Acids Res.">
        <title>Recovery of RNA polymerase II synthesis following DNA damage in mutants of Saccharomyces cerevisiae defective in nucleotide excision repair.</title>
        <authorList>
            <person name="Reagan M.S."/>
            <person name="Friedberg E.C."/>
        </authorList>
    </citation>
    <scope>FUNCTION</scope>
</reference>
<reference key="5">
    <citation type="journal article" date="2012" name="Proc. Natl. Acad. Sci. U.S.A.">
        <title>N-terminal acetylome analyses and functional insights of the N-terminal acetyltransferase NatB.</title>
        <authorList>
            <person name="Van Damme P."/>
            <person name="Lasa M."/>
            <person name="Polevoda B."/>
            <person name="Gazquez C."/>
            <person name="Elosegui-Artola A."/>
            <person name="Kim D.S."/>
            <person name="De Juan-Pardo E."/>
            <person name="Demeyer K."/>
            <person name="Hole K."/>
            <person name="Larrea E."/>
            <person name="Timmerman E."/>
            <person name="Prieto J."/>
            <person name="Arnesen T."/>
            <person name="Sherman F."/>
            <person name="Gevaert K."/>
            <person name="Aldabe R."/>
        </authorList>
    </citation>
    <scope>IDENTIFICATION BY MASS SPECTROMETRY [LARGE SCALE ANALYSIS]</scope>
</reference>
<accession>Q12021</accession>
<accession>D6VS14</accession>
<evidence type="ECO:0000269" key="1">
    <source>
    </source>
</evidence>
<evidence type="ECO:0000269" key="2">
    <source>
    </source>
</evidence>
<evidence type="ECO:0000305" key="3"/>
<proteinExistence type="evidence at protein level"/>
<name>RAD28_YEAST</name>
<organism>
    <name type="scientific">Saccharomyces cerevisiae (strain ATCC 204508 / S288c)</name>
    <name type="common">Baker's yeast</name>
    <dbReference type="NCBI Taxonomy" id="559292"/>
    <lineage>
        <taxon>Eukaryota</taxon>
        <taxon>Fungi</taxon>
        <taxon>Dikarya</taxon>
        <taxon>Ascomycota</taxon>
        <taxon>Saccharomycotina</taxon>
        <taxon>Saccharomycetes</taxon>
        <taxon>Saccharomycetales</taxon>
        <taxon>Saccharomycetaceae</taxon>
        <taxon>Saccharomyces</taxon>
    </lineage>
</organism>
<feature type="chain" id="PRO_0000268697" description="Radiation-sensitive protein 28">
    <location>
        <begin position="1"/>
        <end position="506"/>
    </location>
</feature>
<feature type="repeat" description="WD 1">
    <location>
        <begin position="55"/>
        <end position="94"/>
    </location>
</feature>
<feature type="repeat" description="WD 2">
    <location>
        <begin position="193"/>
        <end position="233"/>
    </location>
</feature>
<feature type="repeat" description="WD 3">
    <location>
        <begin position="285"/>
        <end position="325"/>
    </location>
</feature>
<feature type="repeat" description="WD 4">
    <location>
        <begin position="357"/>
        <end position="396"/>
    </location>
</feature>
<feature type="repeat" description="WD 5">
    <location>
        <begin position="404"/>
        <end position="451"/>
    </location>
</feature>
<comment type="function">
    <text evidence="1 2">Involved in transcription-coupled repair nucleotide excision repair (NER) of UV-induced DNA lesions.</text>
</comment>
<comment type="interaction">
    <interactant intactId="EBI-29718">
        <id>Q12021</id>
    </interactant>
    <interactant intactId="EBI-6194">
        <id>P39009</id>
        <label>DUN1</label>
    </interactant>
    <organismsDiffer>false</organismsDiffer>
    <experiments>2</experiments>
</comment>
<comment type="subcellular location">
    <subcellularLocation>
        <location evidence="3">Nucleus</location>
    </subcellularLocation>
</comment>
<protein>
    <recommendedName>
        <fullName>Radiation-sensitive protein 28</fullName>
    </recommendedName>
</protein>
<sequence length="506" mass="58230">MDPFLEFRVGNISLNEFYRRTIQSEFERILEDPLSNMKNYRFSKQSNYSTKEKTPLSIGVNCLDIDDTGQVLLGGGDDGSLSIWGLDESLHRNDEGEQELINKRLNYIKRQPHQSDDEPAQIMGYKNKRTRINDNNTMRLVHSFQTQRNKYRMYRQSSAAVPVQRSHISNKTDSPIGFSETLSETDSEASISHHKYGITTLKWYKADNGMFFTGSNDKTVKIWDTNRFEAVQDINLGYKINQIDNNVVDDSSLLVVASEDYYPRLIDLRTMNSGVTALGMGNQTRMQSEILCCKFNPVREQIIACGDMEGGVKLWDLRMRNRLYSELKRNKNRFKTINNDDNDDQSDVYFSSNQSKAHLRCCSDIVWNSEGSELCSVGMDGKLNVWRPFTEILQPEGLASYSQLGTQDLSRIKYKKRVSRRLLWFDKFLLCITDNGEVEIYNTEEKKLWNKLEYPMVNQVKKNQASHCQFSSMIVQTNIMNSVGLKLFFGTNNNTVSDGGSIFECS</sequence>
<gene>
    <name type="primary">RAD28</name>
    <name type="ordered locus">YDR030C</name>
    <name type="ORF">YD9813.08c</name>
</gene>
<keyword id="KW-0227">DNA damage</keyword>
<keyword id="KW-0234">DNA repair</keyword>
<keyword id="KW-0539">Nucleus</keyword>
<keyword id="KW-1185">Reference proteome</keyword>
<keyword id="KW-0677">Repeat</keyword>
<keyword id="KW-0853">WD repeat</keyword>
<dbReference type="EMBL" id="Z47814">
    <property type="protein sequence ID" value="CAA87809.1"/>
    <property type="molecule type" value="Genomic_DNA"/>
</dbReference>
<dbReference type="EMBL" id="Z74326">
    <property type="protein sequence ID" value="CAA98852.1"/>
    <property type="molecule type" value="Genomic_DNA"/>
</dbReference>
<dbReference type="EMBL" id="BK006938">
    <property type="protein sequence ID" value="DAA11874.1"/>
    <property type="molecule type" value="Genomic_DNA"/>
</dbReference>
<dbReference type="PIR" id="S50937">
    <property type="entry name" value="S50937"/>
</dbReference>
<dbReference type="RefSeq" id="NP_010313.3">
    <property type="nucleotide sequence ID" value="NM_001180338.3"/>
</dbReference>
<dbReference type="BioGRID" id="32079">
    <property type="interactions" value="36"/>
</dbReference>
<dbReference type="DIP" id="DIP-5177N"/>
<dbReference type="FunCoup" id="Q12021">
    <property type="interactions" value="149"/>
</dbReference>
<dbReference type="IntAct" id="Q12021">
    <property type="interactions" value="13"/>
</dbReference>
<dbReference type="STRING" id="4932.YDR030C"/>
<dbReference type="PaxDb" id="4932-YDR030C"/>
<dbReference type="PeptideAtlas" id="Q12021"/>
<dbReference type="EnsemblFungi" id="YDR030C_mRNA">
    <property type="protein sequence ID" value="YDR030C"/>
    <property type="gene ID" value="YDR030C"/>
</dbReference>
<dbReference type="GeneID" id="851594"/>
<dbReference type="KEGG" id="sce:YDR030C"/>
<dbReference type="AGR" id="SGD:S000002437"/>
<dbReference type="SGD" id="S000002437">
    <property type="gene designation" value="RAD28"/>
</dbReference>
<dbReference type="VEuPathDB" id="FungiDB:YDR030C"/>
<dbReference type="eggNOG" id="KOG4155">
    <property type="taxonomic scope" value="Eukaryota"/>
</dbReference>
<dbReference type="GeneTree" id="ENSGT00940000176625"/>
<dbReference type="HOGENOM" id="CLU_042821_0_0_1"/>
<dbReference type="InParanoid" id="Q12021"/>
<dbReference type="OMA" id="WNSEGSE"/>
<dbReference type="OrthoDB" id="361494at2759"/>
<dbReference type="BioCyc" id="YEAST:G3O-29645-MONOMER"/>
<dbReference type="Reactome" id="R-SCE-6781823">
    <property type="pathway name" value="Formation of TC-NER Pre-Incision Complex"/>
</dbReference>
<dbReference type="Reactome" id="R-SCE-6782135">
    <property type="pathway name" value="Dual incision in TC-NER"/>
</dbReference>
<dbReference type="Reactome" id="R-SCE-6782210">
    <property type="pathway name" value="Gap-filling DNA repair synthesis and ligation in TC-NER"/>
</dbReference>
<dbReference type="BioGRID-ORCS" id="851594">
    <property type="hits" value="3 hits in 10 CRISPR screens"/>
</dbReference>
<dbReference type="PRO" id="PR:Q12021"/>
<dbReference type="Proteomes" id="UP000002311">
    <property type="component" value="Chromosome IV"/>
</dbReference>
<dbReference type="RNAct" id="Q12021">
    <property type="molecule type" value="protein"/>
</dbReference>
<dbReference type="GO" id="GO:0031464">
    <property type="term" value="C:Cul4A-RING E3 ubiquitin ligase complex"/>
    <property type="evidence" value="ECO:0000318"/>
    <property type="project" value="GO_Central"/>
</dbReference>
<dbReference type="GO" id="GO:0000109">
    <property type="term" value="C:nucleotide-excision repair complex"/>
    <property type="evidence" value="ECO:0000318"/>
    <property type="project" value="GO_Central"/>
</dbReference>
<dbReference type="GO" id="GO:0005634">
    <property type="term" value="C:nucleus"/>
    <property type="evidence" value="ECO:0000305"/>
    <property type="project" value="SGD"/>
</dbReference>
<dbReference type="GO" id="GO:0006281">
    <property type="term" value="P:DNA repair"/>
    <property type="evidence" value="ECO:0000316"/>
    <property type="project" value="SGD"/>
</dbReference>
<dbReference type="GO" id="GO:0043161">
    <property type="term" value="P:proteasome-mediated ubiquitin-dependent protein catabolic process"/>
    <property type="evidence" value="ECO:0000318"/>
    <property type="project" value="GO_Central"/>
</dbReference>
<dbReference type="GO" id="GO:0000209">
    <property type="term" value="P:protein polyubiquitination"/>
    <property type="evidence" value="ECO:0000318"/>
    <property type="project" value="GO_Central"/>
</dbReference>
<dbReference type="GO" id="GO:0006283">
    <property type="term" value="P:transcription-coupled nucleotide-excision repair"/>
    <property type="evidence" value="ECO:0000318"/>
    <property type="project" value="GO_Central"/>
</dbReference>
<dbReference type="FunFam" id="2.130.10.10:FF:001444">
    <property type="entry name" value="Radiation sensitive protein"/>
    <property type="match status" value="1"/>
</dbReference>
<dbReference type="Gene3D" id="2.130.10.10">
    <property type="entry name" value="YVTN repeat-like/Quinoprotein amine dehydrogenase"/>
    <property type="match status" value="1"/>
</dbReference>
<dbReference type="InterPro" id="IPR020472">
    <property type="entry name" value="G-protein_beta_WD-40_rep"/>
</dbReference>
<dbReference type="InterPro" id="IPR042238">
    <property type="entry name" value="Rad28/ERCC8/Ckn1/ATCSA-1"/>
</dbReference>
<dbReference type="InterPro" id="IPR015943">
    <property type="entry name" value="WD40/YVTN_repeat-like_dom_sf"/>
</dbReference>
<dbReference type="InterPro" id="IPR036322">
    <property type="entry name" value="WD40_repeat_dom_sf"/>
</dbReference>
<dbReference type="InterPro" id="IPR001680">
    <property type="entry name" value="WD40_rpt"/>
</dbReference>
<dbReference type="PANTHER" id="PTHR46202">
    <property type="entry name" value="DNA EXCISION REPAIR PROTEIN ERCC-8"/>
    <property type="match status" value="1"/>
</dbReference>
<dbReference type="PANTHER" id="PTHR46202:SF1">
    <property type="entry name" value="DNA EXCISION REPAIR PROTEIN ERCC-8"/>
    <property type="match status" value="1"/>
</dbReference>
<dbReference type="Pfam" id="PF00400">
    <property type="entry name" value="WD40"/>
    <property type="match status" value="4"/>
</dbReference>
<dbReference type="PRINTS" id="PR00320">
    <property type="entry name" value="GPROTEINBRPT"/>
</dbReference>
<dbReference type="SMART" id="SM00320">
    <property type="entry name" value="WD40"/>
    <property type="match status" value="4"/>
</dbReference>
<dbReference type="SUPFAM" id="SSF50978">
    <property type="entry name" value="WD40 repeat-like"/>
    <property type="match status" value="1"/>
</dbReference>
<dbReference type="PROSITE" id="PS50082">
    <property type="entry name" value="WD_REPEATS_2"/>
    <property type="match status" value="1"/>
</dbReference>
<dbReference type="PROSITE" id="PS50294">
    <property type="entry name" value="WD_REPEATS_REGION"/>
    <property type="match status" value="1"/>
</dbReference>